<reference key="1">
    <citation type="journal article" date="2005" name="J. Bacteriol.">
        <title>Whole-genome sequence analysis of Pseudomonas syringae pv. phaseolicola 1448A reveals divergence among pathovars in genes involved in virulence and transposition.</title>
        <authorList>
            <person name="Joardar V."/>
            <person name="Lindeberg M."/>
            <person name="Jackson R.W."/>
            <person name="Selengut J."/>
            <person name="Dodson R."/>
            <person name="Brinkac L.M."/>
            <person name="Daugherty S.C."/>
            <person name="DeBoy R.T."/>
            <person name="Durkin A.S."/>
            <person name="Gwinn Giglio M."/>
            <person name="Madupu R."/>
            <person name="Nelson W.C."/>
            <person name="Rosovitz M.J."/>
            <person name="Sullivan S.A."/>
            <person name="Crabtree J."/>
            <person name="Creasy T."/>
            <person name="Davidsen T.M."/>
            <person name="Haft D.H."/>
            <person name="Zafar N."/>
            <person name="Zhou L."/>
            <person name="Halpin R."/>
            <person name="Holley T."/>
            <person name="Khouri H.M."/>
            <person name="Feldblyum T.V."/>
            <person name="White O."/>
            <person name="Fraser C.M."/>
            <person name="Chatterjee A.K."/>
            <person name="Cartinhour S."/>
            <person name="Schneider D."/>
            <person name="Mansfield J.W."/>
            <person name="Collmer A."/>
            <person name="Buell R."/>
        </authorList>
    </citation>
    <scope>NUCLEOTIDE SEQUENCE [LARGE SCALE GENOMIC DNA]</scope>
    <source>
        <strain>1448A / Race 6</strain>
    </source>
</reference>
<name>BIOB_PSE14</name>
<comment type="function">
    <text evidence="1">Catalyzes the conversion of dethiobiotin (DTB) to biotin by the insertion of a sulfur atom into dethiobiotin via a radical-based mechanism.</text>
</comment>
<comment type="catalytic activity">
    <reaction evidence="1">
        <text>(4R,5S)-dethiobiotin + (sulfur carrier)-SH + 2 reduced [2Fe-2S]-[ferredoxin] + 2 S-adenosyl-L-methionine = (sulfur carrier)-H + biotin + 2 5'-deoxyadenosine + 2 L-methionine + 2 oxidized [2Fe-2S]-[ferredoxin]</text>
        <dbReference type="Rhea" id="RHEA:22060"/>
        <dbReference type="Rhea" id="RHEA-COMP:10000"/>
        <dbReference type="Rhea" id="RHEA-COMP:10001"/>
        <dbReference type="Rhea" id="RHEA-COMP:14737"/>
        <dbReference type="Rhea" id="RHEA-COMP:14739"/>
        <dbReference type="ChEBI" id="CHEBI:17319"/>
        <dbReference type="ChEBI" id="CHEBI:29917"/>
        <dbReference type="ChEBI" id="CHEBI:33737"/>
        <dbReference type="ChEBI" id="CHEBI:33738"/>
        <dbReference type="ChEBI" id="CHEBI:57586"/>
        <dbReference type="ChEBI" id="CHEBI:57844"/>
        <dbReference type="ChEBI" id="CHEBI:59789"/>
        <dbReference type="ChEBI" id="CHEBI:64428"/>
        <dbReference type="ChEBI" id="CHEBI:149473"/>
        <dbReference type="EC" id="2.8.1.6"/>
    </reaction>
</comment>
<comment type="cofactor">
    <cofactor evidence="1">
        <name>[4Fe-4S] cluster</name>
        <dbReference type="ChEBI" id="CHEBI:49883"/>
    </cofactor>
    <text evidence="1">Binds 1 [4Fe-4S] cluster. The cluster is coordinated with 3 cysteines and an exchangeable S-adenosyl-L-methionine.</text>
</comment>
<comment type="cofactor">
    <cofactor evidence="1">
        <name>[2Fe-2S] cluster</name>
        <dbReference type="ChEBI" id="CHEBI:190135"/>
    </cofactor>
    <text evidence="1">Binds 1 [2Fe-2S] cluster. The cluster is coordinated with 3 cysteines and 1 arginine.</text>
</comment>
<comment type="pathway">
    <text evidence="1">Cofactor biosynthesis; biotin biosynthesis; biotin from 7,8-diaminononanoate: step 2/2.</text>
</comment>
<comment type="subunit">
    <text evidence="1">Homodimer.</text>
</comment>
<comment type="similarity">
    <text evidence="1">Belongs to the radical SAM superfamily. Biotin synthase family.</text>
</comment>
<organism>
    <name type="scientific">Pseudomonas savastanoi pv. phaseolicola (strain 1448A / Race 6)</name>
    <name type="common">Pseudomonas syringae pv. phaseolicola (strain 1448A / Race 6)</name>
    <dbReference type="NCBI Taxonomy" id="264730"/>
    <lineage>
        <taxon>Bacteria</taxon>
        <taxon>Pseudomonadati</taxon>
        <taxon>Pseudomonadota</taxon>
        <taxon>Gammaproteobacteria</taxon>
        <taxon>Pseudomonadales</taxon>
        <taxon>Pseudomonadaceae</taxon>
        <taxon>Pseudomonas</taxon>
    </lineage>
</organism>
<evidence type="ECO:0000255" key="1">
    <source>
        <dbReference type="HAMAP-Rule" id="MF_01694"/>
    </source>
</evidence>
<evidence type="ECO:0000255" key="2">
    <source>
        <dbReference type="PROSITE-ProRule" id="PRU01266"/>
    </source>
</evidence>
<accession>Q48CS1</accession>
<protein>
    <recommendedName>
        <fullName evidence="1">Biotin synthase</fullName>
        <ecNumber evidence="1">2.8.1.6</ecNumber>
    </recommendedName>
</protein>
<gene>
    <name evidence="1" type="primary">bioB</name>
    <name type="ordered locus">PSPPH_4721</name>
</gene>
<feature type="chain" id="PRO_0000381550" description="Biotin synthase">
    <location>
        <begin position="1"/>
        <end position="352"/>
    </location>
</feature>
<feature type="domain" description="Radical SAM core" evidence="2">
    <location>
        <begin position="44"/>
        <end position="262"/>
    </location>
</feature>
<feature type="binding site" evidence="1">
    <location>
        <position position="59"/>
    </location>
    <ligand>
        <name>[4Fe-4S] cluster</name>
        <dbReference type="ChEBI" id="CHEBI:49883"/>
        <note>4Fe-4S-S-AdoMet</note>
    </ligand>
</feature>
<feature type="binding site" evidence="1">
    <location>
        <position position="63"/>
    </location>
    <ligand>
        <name>[4Fe-4S] cluster</name>
        <dbReference type="ChEBI" id="CHEBI:49883"/>
        <note>4Fe-4S-S-AdoMet</note>
    </ligand>
</feature>
<feature type="binding site" evidence="1">
    <location>
        <position position="66"/>
    </location>
    <ligand>
        <name>[4Fe-4S] cluster</name>
        <dbReference type="ChEBI" id="CHEBI:49883"/>
        <note>4Fe-4S-S-AdoMet</note>
    </ligand>
</feature>
<feature type="binding site" evidence="1">
    <location>
        <position position="103"/>
    </location>
    <ligand>
        <name>[2Fe-2S] cluster</name>
        <dbReference type="ChEBI" id="CHEBI:190135"/>
    </ligand>
</feature>
<feature type="binding site" evidence="1">
    <location>
        <position position="134"/>
    </location>
    <ligand>
        <name>[2Fe-2S] cluster</name>
        <dbReference type="ChEBI" id="CHEBI:190135"/>
    </ligand>
</feature>
<feature type="binding site" evidence="1">
    <location>
        <position position="194"/>
    </location>
    <ligand>
        <name>[2Fe-2S] cluster</name>
        <dbReference type="ChEBI" id="CHEBI:190135"/>
    </ligand>
</feature>
<feature type="binding site" evidence="1">
    <location>
        <position position="266"/>
    </location>
    <ligand>
        <name>[2Fe-2S] cluster</name>
        <dbReference type="ChEBI" id="CHEBI:190135"/>
    </ligand>
</feature>
<dbReference type="EC" id="2.8.1.6" evidence="1"/>
<dbReference type="EMBL" id="CP000058">
    <property type="protein sequence ID" value="AAZ36522.1"/>
    <property type="molecule type" value="Genomic_DNA"/>
</dbReference>
<dbReference type="RefSeq" id="WP_011169710.1">
    <property type="nucleotide sequence ID" value="NC_005773.3"/>
</dbReference>
<dbReference type="SMR" id="Q48CS1"/>
<dbReference type="KEGG" id="psp:PSPPH_4721"/>
<dbReference type="eggNOG" id="COG0502">
    <property type="taxonomic scope" value="Bacteria"/>
</dbReference>
<dbReference type="HOGENOM" id="CLU_033172_1_2_6"/>
<dbReference type="UniPathway" id="UPA00078">
    <property type="reaction ID" value="UER00162"/>
</dbReference>
<dbReference type="Proteomes" id="UP000000551">
    <property type="component" value="Chromosome"/>
</dbReference>
<dbReference type="GO" id="GO:0051537">
    <property type="term" value="F:2 iron, 2 sulfur cluster binding"/>
    <property type="evidence" value="ECO:0007669"/>
    <property type="project" value="UniProtKB-KW"/>
</dbReference>
<dbReference type="GO" id="GO:0051539">
    <property type="term" value="F:4 iron, 4 sulfur cluster binding"/>
    <property type="evidence" value="ECO:0007669"/>
    <property type="project" value="UniProtKB-KW"/>
</dbReference>
<dbReference type="GO" id="GO:0004076">
    <property type="term" value="F:biotin synthase activity"/>
    <property type="evidence" value="ECO:0007669"/>
    <property type="project" value="UniProtKB-UniRule"/>
</dbReference>
<dbReference type="GO" id="GO:0005506">
    <property type="term" value="F:iron ion binding"/>
    <property type="evidence" value="ECO:0007669"/>
    <property type="project" value="UniProtKB-UniRule"/>
</dbReference>
<dbReference type="GO" id="GO:0009102">
    <property type="term" value="P:biotin biosynthetic process"/>
    <property type="evidence" value="ECO:0007669"/>
    <property type="project" value="UniProtKB-UniRule"/>
</dbReference>
<dbReference type="CDD" id="cd01335">
    <property type="entry name" value="Radical_SAM"/>
    <property type="match status" value="1"/>
</dbReference>
<dbReference type="FunFam" id="3.20.20.70:FF:000011">
    <property type="entry name" value="Biotin synthase"/>
    <property type="match status" value="1"/>
</dbReference>
<dbReference type="Gene3D" id="3.20.20.70">
    <property type="entry name" value="Aldolase class I"/>
    <property type="match status" value="1"/>
</dbReference>
<dbReference type="HAMAP" id="MF_01694">
    <property type="entry name" value="BioB"/>
    <property type="match status" value="1"/>
</dbReference>
<dbReference type="InterPro" id="IPR013785">
    <property type="entry name" value="Aldolase_TIM"/>
</dbReference>
<dbReference type="InterPro" id="IPR010722">
    <property type="entry name" value="BATS_dom"/>
</dbReference>
<dbReference type="InterPro" id="IPR002684">
    <property type="entry name" value="Biotin_synth/BioAB"/>
</dbReference>
<dbReference type="InterPro" id="IPR024177">
    <property type="entry name" value="Biotin_synthase"/>
</dbReference>
<dbReference type="InterPro" id="IPR006638">
    <property type="entry name" value="Elp3/MiaA/NifB-like_rSAM"/>
</dbReference>
<dbReference type="InterPro" id="IPR007197">
    <property type="entry name" value="rSAM"/>
</dbReference>
<dbReference type="NCBIfam" id="TIGR00433">
    <property type="entry name" value="bioB"/>
    <property type="match status" value="1"/>
</dbReference>
<dbReference type="PANTHER" id="PTHR22976">
    <property type="entry name" value="BIOTIN SYNTHASE"/>
    <property type="match status" value="1"/>
</dbReference>
<dbReference type="PANTHER" id="PTHR22976:SF2">
    <property type="entry name" value="BIOTIN SYNTHASE, MITOCHONDRIAL"/>
    <property type="match status" value="1"/>
</dbReference>
<dbReference type="Pfam" id="PF06968">
    <property type="entry name" value="BATS"/>
    <property type="match status" value="1"/>
</dbReference>
<dbReference type="Pfam" id="PF04055">
    <property type="entry name" value="Radical_SAM"/>
    <property type="match status" value="1"/>
</dbReference>
<dbReference type="PIRSF" id="PIRSF001619">
    <property type="entry name" value="Biotin_synth"/>
    <property type="match status" value="1"/>
</dbReference>
<dbReference type="SFLD" id="SFLDF00272">
    <property type="entry name" value="biotin_synthase"/>
    <property type="match status" value="1"/>
</dbReference>
<dbReference type="SFLD" id="SFLDS00029">
    <property type="entry name" value="Radical_SAM"/>
    <property type="match status" value="1"/>
</dbReference>
<dbReference type="SMART" id="SM00876">
    <property type="entry name" value="BATS"/>
    <property type="match status" value="1"/>
</dbReference>
<dbReference type="SMART" id="SM00729">
    <property type="entry name" value="Elp3"/>
    <property type="match status" value="1"/>
</dbReference>
<dbReference type="SUPFAM" id="SSF102114">
    <property type="entry name" value="Radical SAM enzymes"/>
    <property type="match status" value="1"/>
</dbReference>
<dbReference type="PROSITE" id="PS51918">
    <property type="entry name" value="RADICAL_SAM"/>
    <property type="match status" value="1"/>
</dbReference>
<proteinExistence type="inferred from homology"/>
<keyword id="KW-0001">2Fe-2S</keyword>
<keyword id="KW-0004">4Fe-4S</keyword>
<keyword id="KW-0093">Biotin biosynthesis</keyword>
<keyword id="KW-0408">Iron</keyword>
<keyword id="KW-0411">Iron-sulfur</keyword>
<keyword id="KW-0479">Metal-binding</keyword>
<keyword id="KW-0949">S-adenosyl-L-methionine</keyword>
<keyword id="KW-0808">Transferase</keyword>
<sequence>MSASTTDTLRHDWTLAEVRALFVQPFNDLLFQAQTVHRAHFDANRVQVSTLLSIKTGACPEDCKYCPQSGHYNTGLEKEKLLEVQKVLEEAARAKAIGSTRFCMGAAWKHPSAKDMPYVLEMVKGVKAMGMETCMTLGRLDQEQTEALATAGLDYYNHNLDTSPEFYGSIITTRTYSERLQTLAYVRDAGMKICSGGILGMGESLDDRAGLLIQLANLPEHPESVPINMLVKVAGTPLENAEDVDPFDFIRMLAVARILMPQSHVRLSAGREAMNEQMQALAFFAGANSIFYGDKLLTTANPQADKDMLLFSRLGIKPEAGEGHADEVHQAAIEQALVEQQSSSMFYDAASA</sequence>